<gene>
    <name type="primary">purC</name>
    <name type="ordered locus">ML2227</name>
    <name type="ORF">MLCB5.16</name>
</gene>
<reference key="1">
    <citation type="journal article" date="2001" name="Nature">
        <title>Massive gene decay in the leprosy bacillus.</title>
        <authorList>
            <person name="Cole S.T."/>
            <person name="Eiglmeier K."/>
            <person name="Parkhill J."/>
            <person name="James K.D."/>
            <person name="Thomson N.R."/>
            <person name="Wheeler P.R."/>
            <person name="Honore N."/>
            <person name="Garnier T."/>
            <person name="Churcher C.M."/>
            <person name="Harris D.E."/>
            <person name="Mungall K.L."/>
            <person name="Basham D."/>
            <person name="Brown D."/>
            <person name="Chillingworth T."/>
            <person name="Connor R."/>
            <person name="Davies R.M."/>
            <person name="Devlin K."/>
            <person name="Duthoy S."/>
            <person name="Feltwell T."/>
            <person name="Fraser A."/>
            <person name="Hamlin N."/>
            <person name="Holroyd S."/>
            <person name="Hornsby T."/>
            <person name="Jagels K."/>
            <person name="Lacroix C."/>
            <person name="Maclean J."/>
            <person name="Moule S."/>
            <person name="Murphy L.D."/>
            <person name="Oliver K."/>
            <person name="Quail M.A."/>
            <person name="Rajandream M.A."/>
            <person name="Rutherford K.M."/>
            <person name="Rutter S."/>
            <person name="Seeger K."/>
            <person name="Simon S."/>
            <person name="Simmonds M."/>
            <person name="Skelton J."/>
            <person name="Squares R."/>
            <person name="Squares S."/>
            <person name="Stevens K."/>
            <person name="Taylor K."/>
            <person name="Whitehead S."/>
            <person name="Woodward J.R."/>
            <person name="Barrell B.G."/>
        </authorList>
    </citation>
    <scope>NUCLEOTIDE SEQUENCE [LARGE SCALE GENOMIC DNA]</scope>
    <source>
        <strain>TN</strain>
    </source>
</reference>
<comment type="catalytic activity">
    <reaction>
        <text>5-amino-1-(5-phospho-D-ribosyl)imidazole-4-carboxylate + L-aspartate + ATP = (2S)-2-[5-amino-1-(5-phospho-beta-D-ribosyl)imidazole-4-carboxamido]succinate + ADP + phosphate + 2 H(+)</text>
        <dbReference type="Rhea" id="RHEA:22628"/>
        <dbReference type="ChEBI" id="CHEBI:15378"/>
        <dbReference type="ChEBI" id="CHEBI:29991"/>
        <dbReference type="ChEBI" id="CHEBI:30616"/>
        <dbReference type="ChEBI" id="CHEBI:43474"/>
        <dbReference type="ChEBI" id="CHEBI:58443"/>
        <dbReference type="ChEBI" id="CHEBI:77657"/>
        <dbReference type="ChEBI" id="CHEBI:456216"/>
        <dbReference type="EC" id="6.3.2.6"/>
    </reaction>
</comment>
<comment type="pathway">
    <text>Purine metabolism; IMP biosynthesis via de novo pathway; 5-amino-1-(5-phospho-D-ribosyl)imidazole-4-carboxamide from 5-amino-1-(5-phospho-D-ribosyl)imidazole-4-carboxylate: step 1/2.</text>
</comment>
<comment type="similarity">
    <text evidence="1">Belongs to the SAICAR synthetase family.</text>
</comment>
<evidence type="ECO:0000305" key="1"/>
<protein>
    <recommendedName>
        <fullName>Phosphoribosylaminoimidazole-succinocarboxamide synthase</fullName>
        <ecNumber>6.3.2.6</ecNumber>
    </recommendedName>
    <alternativeName>
        <fullName>SAICAR synthetase</fullName>
    </alternativeName>
</protein>
<name>PUR7_MYCLE</name>
<accession>O08361</accession>
<sequence length="297" mass="33163">MRPALFDYRHLASGKVREIYRIDDEHLLMVASDRISAFDYVLDSTIPDKGRILTAMSVFFFSFVDAPNHLAGPPDDPRIPEEVLGRALVVRQLDMLPMECVARGYLTGSGLLDYQATGKVCGIPLPPGLVEASRFAAPLFTPAMKAVLGEHDENISFSRMIEMVGVVRANQLRDRTLQIYLQAADHALKTGIIIADTKFEFGIDRDGNLLLADEIFTPDSSRYWSVDDYRVGVVQRSFDKQFVRNWLVSPESGWVRAGALSPPSLPDDIIEATRLCYVEVYERISGMSFDDWIGPGA</sequence>
<dbReference type="EC" id="6.3.2.6"/>
<dbReference type="EMBL" id="Z95151">
    <property type="protein sequence ID" value="CAB08411.1"/>
    <property type="molecule type" value="Genomic_DNA"/>
</dbReference>
<dbReference type="EMBL" id="AL583924">
    <property type="protein sequence ID" value="CAC31183.1"/>
    <property type="molecule type" value="Genomic_DNA"/>
</dbReference>
<dbReference type="PIR" id="G87187">
    <property type="entry name" value="G87187"/>
</dbReference>
<dbReference type="RefSeq" id="NP_302456.1">
    <property type="nucleotide sequence ID" value="NC_002677.1"/>
</dbReference>
<dbReference type="RefSeq" id="WP_010908776.1">
    <property type="nucleotide sequence ID" value="NC_002677.1"/>
</dbReference>
<dbReference type="SMR" id="O08361"/>
<dbReference type="STRING" id="272631.gene:17576085"/>
<dbReference type="KEGG" id="mle:ML2227"/>
<dbReference type="PATRIC" id="fig|272631.5.peg.4227"/>
<dbReference type="Leproma" id="ML2227"/>
<dbReference type="eggNOG" id="COG0152">
    <property type="taxonomic scope" value="Bacteria"/>
</dbReference>
<dbReference type="HOGENOM" id="CLU_045637_0_0_11"/>
<dbReference type="OrthoDB" id="9801549at2"/>
<dbReference type="UniPathway" id="UPA00074">
    <property type="reaction ID" value="UER00131"/>
</dbReference>
<dbReference type="Proteomes" id="UP000000806">
    <property type="component" value="Chromosome"/>
</dbReference>
<dbReference type="GO" id="GO:0005737">
    <property type="term" value="C:cytoplasm"/>
    <property type="evidence" value="ECO:0007669"/>
    <property type="project" value="TreeGrafter"/>
</dbReference>
<dbReference type="GO" id="GO:0005524">
    <property type="term" value="F:ATP binding"/>
    <property type="evidence" value="ECO:0007669"/>
    <property type="project" value="UniProtKB-KW"/>
</dbReference>
<dbReference type="GO" id="GO:0004639">
    <property type="term" value="F:phosphoribosylaminoimidazolesuccinocarboxamide synthase activity"/>
    <property type="evidence" value="ECO:0007669"/>
    <property type="project" value="UniProtKB-UniRule"/>
</dbReference>
<dbReference type="GO" id="GO:0006189">
    <property type="term" value="P:'de novo' IMP biosynthetic process"/>
    <property type="evidence" value="ECO:0007669"/>
    <property type="project" value="UniProtKB-UniRule"/>
</dbReference>
<dbReference type="CDD" id="cd01414">
    <property type="entry name" value="SAICAR_synt_Sc"/>
    <property type="match status" value="1"/>
</dbReference>
<dbReference type="FunFam" id="3.30.200.20:FF:000199">
    <property type="entry name" value="Phosphoribosylaminoimidazole-succinocarboxamide synthase"/>
    <property type="match status" value="1"/>
</dbReference>
<dbReference type="FunFam" id="3.30.470.20:FF:000015">
    <property type="entry name" value="Phosphoribosylaminoimidazole-succinocarboxamide synthase"/>
    <property type="match status" value="1"/>
</dbReference>
<dbReference type="Gene3D" id="3.30.470.20">
    <property type="entry name" value="ATP-grasp fold, B domain"/>
    <property type="match status" value="1"/>
</dbReference>
<dbReference type="Gene3D" id="3.30.200.20">
    <property type="entry name" value="Phosphorylase Kinase, domain 1"/>
    <property type="match status" value="1"/>
</dbReference>
<dbReference type="HAMAP" id="MF_00137">
    <property type="entry name" value="SAICAR_synth"/>
    <property type="match status" value="1"/>
</dbReference>
<dbReference type="InterPro" id="IPR028923">
    <property type="entry name" value="SAICAR_synt/ADE2_N"/>
</dbReference>
<dbReference type="InterPro" id="IPR001636">
    <property type="entry name" value="SAICAR_synth"/>
</dbReference>
<dbReference type="InterPro" id="IPR018236">
    <property type="entry name" value="SAICAR_synthetase_CS"/>
</dbReference>
<dbReference type="NCBIfam" id="NF010568">
    <property type="entry name" value="PRK13961.1"/>
    <property type="match status" value="1"/>
</dbReference>
<dbReference type="NCBIfam" id="TIGR00081">
    <property type="entry name" value="purC"/>
    <property type="match status" value="1"/>
</dbReference>
<dbReference type="PANTHER" id="PTHR43700">
    <property type="entry name" value="PHOSPHORIBOSYLAMINOIMIDAZOLE-SUCCINOCARBOXAMIDE SYNTHASE"/>
    <property type="match status" value="1"/>
</dbReference>
<dbReference type="PANTHER" id="PTHR43700:SF1">
    <property type="entry name" value="PHOSPHORIBOSYLAMINOIMIDAZOLE-SUCCINOCARBOXAMIDE SYNTHASE"/>
    <property type="match status" value="1"/>
</dbReference>
<dbReference type="Pfam" id="PF01259">
    <property type="entry name" value="SAICAR_synt"/>
    <property type="match status" value="1"/>
</dbReference>
<dbReference type="SUPFAM" id="SSF56104">
    <property type="entry name" value="SAICAR synthase-like"/>
    <property type="match status" value="1"/>
</dbReference>
<dbReference type="PROSITE" id="PS01057">
    <property type="entry name" value="SAICAR_SYNTHETASE_1"/>
    <property type="match status" value="1"/>
</dbReference>
<dbReference type="PROSITE" id="PS01058">
    <property type="entry name" value="SAICAR_SYNTHETASE_2"/>
    <property type="match status" value="1"/>
</dbReference>
<keyword id="KW-0067">ATP-binding</keyword>
<keyword id="KW-0436">Ligase</keyword>
<keyword id="KW-0547">Nucleotide-binding</keyword>
<keyword id="KW-0658">Purine biosynthesis</keyword>
<keyword id="KW-1185">Reference proteome</keyword>
<organism>
    <name type="scientific">Mycobacterium leprae (strain TN)</name>
    <dbReference type="NCBI Taxonomy" id="272631"/>
    <lineage>
        <taxon>Bacteria</taxon>
        <taxon>Bacillati</taxon>
        <taxon>Actinomycetota</taxon>
        <taxon>Actinomycetes</taxon>
        <taxon>Mycobacteriales</taxon>
        <taxon>Mycobacteriaceae</taxon>
        <taxon>Mycobacterium</taxon>
    </lineage>
</organism>
<proteinExistence type="inferred from homology"/>
<feature type="chain" id="PRO_0000100842" description="Phosphoribosylaminoimidazole-succinocarboxamide synthase">
    <location>
        <begin position="1"/>
        <end position="297"/>
    </location>
</feature>